<accession>Q0WMN5</accession>
<accession>Q9SMV0</accession>
<organism>
    <name type="scientific">Arabidopsis thaliana</name>
    <name type="common">Mouse-ear cress</name>
    <dbReference type="NCBI Taxonomy" id="3702"/>
    <lineage>
        <taxon>Eukaryota</taxon>
        <taxon>Viridiplantae</taxon>
        <taxon>Streptophyta</taxon>
        <taxon>Embryophyta</taxon>
        <taxon>Tracheophyta</taxon>
        <taxon>Spermatophyta</taxon>
        <taxon>Magnoliopsida</taxon>
        <taxon>eudicotyledons</taxon>
        <taxon>Gunneridae</taxon>
        <taxon>Pentapetalae</taxon>
        <taxon>rosids</taxon>
        <taxon>malvids</taxon>
        <taxon>Brassicales</taxon>
        <taxon>Brassicaceae</taxon>
        <taxon>Camelineae</taxon>
        <taxon>Arabidopsis</taxon>
    </lineage>
</organism>
<gene>
    <name type="ordered locus">At3g49140</name>
    <name type="ORF">F2K15.2</name>
    <name type="ORF">T2J13.20</name>
</gene>
<reference key="1">
    <citation type="journal article" date="2000" name="Nature">
        <title>Sequence and analysis of chromosome 3 of the plant Arabidopsis thaliana.</title>
        <authorList>
            <person name="Salanoubat M."/>
            <person name="Lemcke K."/>
            <person name="Rieger M."/>
            <person name="Ansorge W."/>
            <person name="Unseld M."/>
            <person name="Fartmann B."/>
            <person name="Valle G."/>
            <person name="Bloecker H."/>
            <person name="Perez-Alonso M."/>
            <person name="Obermaier B."/>
            <person name="Delseny M."/>
            <person name="Boutry M."/>
            <person name="Grivell L.A."/>
            <person name="Mache R."/>
            <person name="Puigdomenech P."/>
            <person name="De Simone V."/>
            <person name="Choisne N."/>
            <person name="Artiguenave F."/>
            <person name="Robert C."/>
            <person name="Brottier P."/>
            <person name="Wincker P."/>
            <person name="Cattolico L."/>
            <person name="Weissenbach J."/>
            <person name="Saurin W."/>
            <person name="Quetier F."/>
            <person name="Schaefer M."/>
            <person name="Mueller-Auer S."/>
            <person name="Gabel C."/>
            <person name="Fuchs M."/>
            <person name="Benes V."/>
            <person name="Wurmbach E."/>
            <person name="Drzonek H."/>
            <person name="Erfle H."/>
            <person name="Jordan N."/>
            <person name="Bangert S."/>
            <person name="Wiedelmann R."/>
            <person name="Kranz H."/>
            <person name="Voss H."/>
            <person name="Holland R."/>
            <person name="Brandt P."/>
            <person name="Nyakatura G."/>
            <person name="Vezzi A."/>
            <person name="D'Angelo M."/>
            <person name="Pallavicini A."/>
            <person name="Toppo S."/>
            <person name="Simionati B."/>
            <person name="Conrad A."/>
            <person name="Hornischer K."/>
            <person name="Kauer G."/>
            <person name="Loehnert T.-H."/>
            <person name="Nordsiek G."/>
            <person name="Reichelt J."/>
            <person name="Scharfe M."/>
            <person name="Schoen O."/>
            <person name="Bargues M."/>
            <person name="Terol J."/>
            <person name="Climent J."/>
            <person name="Navarro P."/>
            <person name="Collado C."/>
            <person name="Perez-Perez A."/>
            <person name="Ottenwaelder B."/>
            <person name="Duchemin D."/>
            <person name="Cooke R."/>
            <person name="Laudie M."/>
            <person name="Berger-Llauro C."/>
            <person name="Purnelle B."/>
            <person name="Masuy D."/>
            <person name="de Haan M."/>
            <person name="Maarse A.C."/>
            <person name="Alcaraz J.-P."/>
            <person name="Cottet A."/>
            <person name="Casacuberta E."/>
            <person name="Monfort A."/>
            <person name="Argiriou A."/>
            <person name="Flores M."/>
            <person name="Liguori R."/>
            <person name="Vitale D."/>
            <person name="Mannhaupt G."/>
            <person name="Haase D."/>
            <person name="Schoof H."/>
            <person name="Rudd S."/>
            <person name="Zaccaria P."/>
            <person name="Mewes H.-W."/>
            <person name="Mayer K.F.X."/>
            <person name="Kaul S."/>
            <person name="Town C.D."/>
            <person name="Koo H.L."/>
            <person name="Tallon L.J."/>
            <person name="Jenkins J."/>
            <person name="Rooney T."/>
            <person name="Rizzo M."/>
            <person name="Walts A."/>
            <person name="Utterback T."/>
            <person name="Fujii C.Y."/>
            <person name="Shea T.P."/>
            <person name="Creasy T.H."/>
            <person name="Haas B."/>
            <person name="Maiti R."/>
            <person name="Wu D."/>
            <person name="Peterson J."/>
            <person name="Van Aken S."/>
            <person name="Pai G."/>
            <person name="Militscher J."/>
            <person name="Sellers P."/>
            <person name="Gill J.E."/>
            <person name="Feldblyum T.V."/>
            <person name="Preuss D."/>
            <person name="Lin X."/>
            <person name="Nierman W.C."/>
            <person name="Salzberg S.L."/>
            <person name="White O."/>
            <person name="Venter J.C."/>
            <person name="Fraser C.M."/>
            <person name="Kaneko T."/>
            <person name="Nakamura Y."/>
            <person name="Sato S."/>
            <person name="Kato T."/>
            <person name="Asamizu E."/>
            <person name="Sasamoto S."/>
            <person name="Kimura T."/>
            <person name="Idesawa K."/>
            <person name="Kawashima K."/>
            <person name="Kishida Y."/>
            <person name="Kiyokawa C."/>
            <person name="Kohara M."/>
            <person name="Matsumoto M."/>
            <person name="Matsuno A."/>
            <person name="Muraki A."/>
            <person name="Nakayama S."/>
            <person name="Nakazaki N."/>
            <person name="Shinpo S."/>
            <person name="Takeuchi C."/>
            <person name="Wada T."/>
            <person name="Watanabe A."/>
            <person name="Yamada M."/>
            <person name="Yasuda M."/>
            <person name="Tabata S."/>
        </authorList>
    </citation>
    <scope>NUCLEOTIDE SEQUENCE [LARGE SCALE GENOMIC DNA]</scope>
    <source>
        <strain>cv. Columbia</strain>
    </source>
</reference>
<reference key="2">
    <citation type="journal article" date="2017" name="Plant J.">
        <title>Araport11: a complete reannotation of the Arabidopsis thaliana reference genome.</title>
        <authorList>
            <person name="Cheng C.Y."/>
            <person name="Krishnakumar V."/>
            <person name="Chan A.P."/>
            <person name="Thibaud-Nissen F."/>
            <person name="Schobel S."/>
            <person name="Town C.D."/>
        </authorList>
    </citation>
    <scope>GENOME REANNOTATION</scope>
    <source>
        <strain>cv. Columbia</strain>
    </source>
</reference>
<reference key="3">
    <citation type="submission" date="2006-07" db="EMBL/GenBank/DDBJ databases">
        <title>Large-scale analysis of RIKEN Arabidopsis full-length (RAFL) cDNAs.</title>
        <authorList>
            <person name="Totoki Y."/>
            <person name="Seki M."/>
            <person name="Ishida J."/>
            <person name="Nakajima M."/>
            <person name="Enju A."/>
            <person name="Kamiya A."/>
            <person name="Narusaka M."/>
            <person name="Shin-i T."/>
            <person name="Nakagawa M."/>
            <person name="Sakamoto N."/>
            <person name="Oishi K."/>
            <person name="Kohara Y."/>
            <person name="Kobayashi M."/>
            <person name="Toyoda A."/>
            <person name="Sakaki Y."/>
            <person name="Sakurai T."/>
            <person name="Iida K."/>
            <person name="Akiyama K."/>
            <person name="Satou M."/>
            <person name="Toyoda T."/>
            <person name="Konagaya A."/>
            <person name="Carninci P."/>
            <person name="Kawai J."/>
            <person name="Hayashizaki Y."/>
            <person name="Shinozaki K."/>
        </authorList>
    </citation>
    <scope>NUCLEOTIDE SEQUENCE [LARGE SCALE MRNA]</scope>
    <source>
        <strain>cv. Columbia</strain>
    </source>
</reference>
<reference key="4">
    <citation type="journal article" date="2009" name="Plant Physiol.">
        <title>Large-scale Arabidopsis phosphoproteome profiling reveals novel chloroplast kinase substrates and phosphorylation networks.</title>
        <authorList>
            <person name="Reiland S."/>
            <person name="Messerli G."/>
            <person name="Baerenfaller K."/>
            <person name="Gerrits B."/>
            <person name="Endler A."/>
            <person name="Grossmann J."/>
            <person name="Gruissem W."/>
            <person name="Baginsky S."/>
        </authorList>
    </citation>
    <scope>PHOSPHORYLATION [LARGE SCALE ANALYSIS] AT SER-355</scope>
    <scope>IDENTIFICATION BY MASS SPECTROMETRY [LARGE SCALE ANALYSIS]</scope>
</reference>
<sequence length="499" mass="55871">MIESVMAVRLSTGFCSSTALLQYRTAPSSEEGGNCFHYASRRVFQPQRIHHIDGSGFLKYNSDYITRKHLRKNRTQATAEYVDSASDPEKQTGKSRYHPSEEIRASLPQNDGDSRLSPAETTRTIIEVNNKGTLMLTGSIGDGVHENILWPDIPYITDQNGNLYFQVKEDEDVMQSVTSENNYVQVIVGFDTMEMIKEMELMGLSDSDFETEDDESGDDDSEDTGEDEDEEEWVAILEDEDEDDDDDDDDDEDDDDSDSDESLGDWANLETMRSCHPMFFAKRMTEVASNDPVDWMDQPSAGLAIQGLLSHILVEDYSDIQKKLADSNSTTNGNKDAENLVDKLEDNSKAGGDESEIDSSQDEKARNVVAFYKLEMIRIQLITAQGDQTEVEVEDVRKAQPDAIAHASAEIISRLEESGDKITEALKSLCWRHNSIQAEEVKLIGIDSLGFDLRLCAGAKIESLRFAFSTRATSEENAEGQIRKLLFPKTNQSTQPKPK</sequence>
<feature type="chain" id="PRO_0000355995" description="Uncharacterized protein At3g49140">
    <location>
        <begin position="1"/>
        <end position="499"/>
    </location>
</feature>
<feature type="region of interest" description="Disordered" evidence="1">
    <location>
        <begin position="76"/>
        <end position="118"/>
    </location>
</feature>
<feature type="region of interest" description="Disordered" evidence="1">
    <location>
        <begin position="208"/>
        <end position="268"/>
    </location>
</feature>
<feature type="region of interest" description="Disordered" evidence="1">
    <location>
        <begin position="478"/>
        <end position="499"/>
    </location>
</feature>
<feature type="compositionally biased region" description="Basic and acidic residues" evidence="1">
    <location>
        <begin position="87"/>
        <end position="104"/>
    </location>
</feature>
<feature type="compositionally biased region" description="Acidic residues" evidence="1">
    <location>
        <begin position="208"/>
        <end position="263"/>
    </location>
</feature>
<feature type="compositionally biased region" description="Polar residues" evidence="1">
    <location>
        <begin position="489"/>
        <end position="499"/>
    </location>
</feature>
<feature type="modified residue" description="Phosphoserine" evidence="3">
    <location>
        <position position="355"/>
    </location>
</feature>
<name>Y3913_ARATH</name>
<dbReference type="EMBL" id="AL132956">
    <property type="status" value="NOT_ANNOTATED_CDS"/>
    <property type="molecule type" value="Genomic_DNA"/>
</dbReference>
<dbReference type="EMBL" id="AL132967">
    <property type="protein sequence ID" value="CAB61996.1"/>
    <property type="status" value="ALT_SEQ"/>
    <property type="molecule type" value="Genomic_DNA"/>
</dbReference>
<dbReference type="EMBL" id="CP002686">
    <property type="protein sequence ID" value="AEE78503.1"/>
    <property type="molecule type" value="Genomic_DNA"/>
</dbReference>
<dbReference type="EMBL" id="AK229783">
    <property type="protein sequence ID" value="BAF01615.1"/>
    <property type="status" value="ALT_INIT"/>
    <property type="molecule type" value="mRNA"/>
</dbReference>
<dbReference type="PIR" id="T46116">
    <property type="entry name" value="T46116"/>
</dbReference>
<dbReference type="RefSeq" id="NP_190483.3">
    <property type="nucleotide sequence ID" value="NM_114773.5"/>
</dbReference>
<dbReference type="FunCoup" id="Q0WMN5">
    <property type="interactions" value="1473"/>
</dbReference>
<dbReference type="STRING" id="3702.Q0WMN5"/>
<dbReference type="iPTMnet" id="Q0WMN5"/>
<dbReference type="PaxDb" id="3702-AT3G49140.1"/>
<dbReference type="ProteomicsDB" id="243123"/>
<dbReference type="EnsemblPlants" id="AT3G49140.1">
    <property type="protein sequence ID" value="AT3G49140.1"/>
    <property type="gene ID" value="AT3G49140"/>
</dbReference>
<dbReference type="GeneID" id="824075"/>
<dbReference type="Gramene" id="AT3G49140.1">
    <property type="protein sequence ID" value="AT3G49140.1"/>
    <property type="gene ID" value="AT3G49140"/>
</dbReference>
<dbReference type="KEGG" id="ath:AT3G49140"/>
<dbReference type="Araport" id="AT3G49140"/>
<dbReference type="TAIR" id="AT3G49140"/>
<dbReference type="eggNOG" id="KOG4197">
    <property type="taxonomic scope" value="Eukaryota"/>
</dbReference>
<dbReference type="HOGENOM" id="CLU_035089_0_0_1"/>
<dbReference type="InParanoid" id="Q0WMN5"/>
<dbReference type="OMA" id="AECTRTI"/>
<dbReference type="PRO" id="PR:Q0WMN5"/>
<dbReference type="Proteomes" id="UP000006548">
    <property type="component" value="Chromosome 3"/>
</dbReference>
<dbReference type="ExpressionAtlas" id="Q0WMN5">
    <property type="expression patterns" value="baseline and differential"/>
</dbReference>
<dbReference type="Gene3D" id="3.20.180.10">
    <property type="entry name" value="PNP-oxidase-like"/>
    <property type="match status" value="1"/>
</dbReference>
<dbReference type="InterPro" id="IPR037119">
    <property type="entry name" value="Haem_oxidase_HugZ-like_sf"/>
</dbReference>
<dbReference type="PANTHER" id="PTHR13343">
    <property type="entry name" value="CREG1 PROTEIN"/>
    <property type="match status" value="1"/>
</dbReference>
<dbReference type="PANTHER" id="PTHR13343:SF28">
    <property type="entry name" value="PENTATRICOPEPTIDE REPEAT (PPR) SUPERFAMILY PROTEIN"/>
    <property type="match status" value="1"/>
</dbReference>
<dbReference type="SUPFAM" id="SSF50475">
    <property type="entry name" value="FMN-binding split barrel"/>
    <property type="match status" value="1"/>
</dbReference>
<evidence type="ECO:0000256" key="1">
    <source>
        <dbReference type="SAM" id="MobiDB-lite"/>
    </source>
</evidence>
<evidence type="ECO:0000305" key="2"/>
<evidence type="ECO:0007744" key="3">
    <source>
    </source>
</evidence>
<protein>
    <recommendedName>
        <fullName>Uncharacterized protein At3g49140</fullName>
    </recommendedName>
</protein>
<proteinExistence type="evidence at protein level"/>
<keyword id="KW-0597">Phosphoprotein</keyword>
<keyword id="KW-1185">Reference proteome</keyword>
<comment type="sequence caution" evidence="2">
    <conflict type="erroneous initiation">
        <sequence resource="EMBL-CDS" id="BAF01615"/>
    </conflict>
</comment>
<comment type="sequence caution" evidence="2">
    <conflict type="erroneous gene model prediction">
        <sequence resource="EMBL-CDS" id="CAB61996"/>
    </conflict>
    <text>The predicted gene has been split into 2 genes: At3g49140 and At3g49142.</text>
</comment>